<sequence>MLGNHLFFIPVLPLFALFSLILKNSWKDILEKAVDPIAICAYGFTIKMALIAALFNSIFGFLITWVITRYEFKGKKFIDAAVDLPFALPTSVAGLTLATVYGNQGWVGRFLKMGNLQIIYTKFGVLLAMIFVSFPFVIRSLQPVLQGLDHGLEEAAWCLGASSFQTFLRVIFPTLVPALVTGFTLSFSRALGEFGSVVMISSNLPLDDLVTSVLIYQSLEQYDYFGASVIGAVILMIALLIIFLINTAQAFYSRR</sequence>
<proteinExistence type="inferred from homology"/>
<name>CYST_PROWI</name>
<reference key="1">
    <citation type="submission" date="1999-08" db="EMBL/GenBank/DDBJ databases">
        <title>A 22 kb fragment of the 53 kb plastid genome of the colourless alga Prototheka wickerhamii containing atp-, rpl-,rps-, rrn-, and trn-genes.</title>
        <authorList>
            <person name="Knauf U."/>
            <person name="Hachtel W."/>
        </authorList>
    </citation>
    <scope>NUCLEOTIDE SEQUENCE [GENOMIC DNA]</scope>
    <source>
        <strain>263-11</strain>
    </source>
</reference>
<comment type="function">
    <text evidence="1">Part of the ABC transporter complex cysAWTP (TC 3.A.1.6.1) involved in sulfate/thiosulfate import. Probably responsible for the translocation of the substrate across the membrane (By similarity).</text>
</comment>
<comment type="subcellular location">
    <subcellularLocation>
        <location evidence="3">Plastid membrane</location>
        <topology evidence="3">Multi-pass membrane protein</topology>
    </subcellularLocation>
</comment>
<comment type="similarity">
    <text evidence="3">Belongs to the binding-protein-dependent transport system permease family. CysTW subfamily.</text>
</comment>
<evidence type="ECO:0000250" key="1"/>
<evidence type="ECO:0000255" key="2">
    <source>
        <dbReference type="PROSITE-ProRule" id="PRU00441"/>
    </source>
</evidence>
<evidence type="ECO:0000305" key="3"/>
<feature type="chain" id="PRO_0000293977" description="Probable sulfate transport system permease protein cysT">
    <location>
        <begin position="1"/>
        <end position="255"/>
    </location>
</feature>
<feature type="transmembrane region" description="Helical" evidence="2">
    <location>
        <begin position="2"/>
        <end position="22"/>
    </location>
</feature>
<feature type="transmembrane region" description="Helical" evidence="2">
    <location>
        <begin position="48"/>
        <end position="68"/>
    </location>
</feature>
<feature type="transmembrane region" description="Helical" evidence="2">
    <location>
        <begin position="77"/>
        <end position="97"/>
    </location>
</feature>
<feature type="transmembrane region" description="Helical" evidence="2">
    <location>
        <begin position="118"/>
        <end position="138"/>
    </location>
</feature>
<feature type="transmembrane region" description="Helical" evidence="2">
    <location>
        <begin position="167"/>
        <end position="187"/>
    </location>
</feature>
<feature type="transmembrane region" description="Helical" evidence="2">
    <location>
        <begin position="195"/>
        <end position="215"/>
    </location>
</feature>
<feature type="transmembrane region" description="Helical" evidence="2">
    <location>
        <begin position="225"/>
        <end position="245"/>
    </location>
</feature>
<feature type="domain" description="ABC transmembrane type-1" evidence="2">
    <location>
        <begin position="42"/>
        <end position="246"/>
    </location>
</feature>
<accession>Q9TJR4</accession>
<organism>
    <name type="scientific">Prototheca wickerhamii</name>
    <dbReference type="NCBI Taxonomy" id="3111"/>
    <lineage>
        <taxon>Eukaryota</taxon>
        <taxon>Viridiplantae</taxon>
        <taxon>Chlorophyta</taxon>
        <taxon>core chlorophytes</taxon>
        <taxon>Trebouxiophyceae</taxon>
        <taxon>Chlorellales</taxon>
        <taxon>Chlorellaceae</taxon>
        <taxon>Prototheca</taxon>
    </lineage>
</organism>
<geneLocation type="non-photosynthetic plastid"/>
<dbReference type="EMBL" id="AJ245645">
    <property type="protein sequence ID" value="CAB53107.1"/>
    <property type="molecule type" value="Genomic_DNA"/>
</dbReference>
<dbReference type="SMR" id="Q9TJR4"/>
<dbReference type="GO" id="GO:0005886">
    <property type="term" value="C:plasma membrane"/>
    <property type="evidence" value="ECO:0007669"/>
    <property type="project" value="InterPro"/>
</dbReference>
<dbReference type="GO" id="GO:0042170">
    <property type="term" value="C:plastid membrane"/>
    <property type="evidence" value="ECO:0007669"/>
    <property type="project" value="UniProtKB-SubCell"/>
</dbReference>
<dbReference type="GO" id="GO:0015419">
    <property type="term" value="F:ABC-type sulfate transporter activity"/>
    <property type="evidence" value="ECO:0007669"/>
    <property type="project" value="InterPro"/>
</dbReference>
<dbReference type="CDD" id="cd06261">
    <property type="entry name" value="TM_PBP2"/>
    <property type="match status" value="1"/>
</dbReference>
<dbReference type="FunFam" id="1.10.3720.10:FF:000004">
    <property type="entry name" value="Sulfate transport system permease protein CysT"/>
    <property type="match status" value="1"/>
</dbReference>
<dbReference type="Gene3D" id="1.10.3720.10">
    <property type="entry name" value="MetI-like"/>
    <property type="match status" value="1"/>
</dbReference>
<dbReference type="InterPro" id="IPR011865">
    <property type="entry name" value="CysT_permease"/>
</dbReference>
<dbReference type="InterPro" id="IPR000515">
    <property type="entry name" value="MetI-like"/>
</dbReference>
<dbReference type="InterPro" id="IPR035906">
    <property type="entry name" value="MetI-like_sf"/>
</dbReference>
<dbReference type="InterPro" id="IPR005667">
    <property type="entry name" value="Sulph_transpt2"/>
</dbReference>
<dbReference type="NCBIfam" id="TIGR00969">
    <property type="entry name" value="3a0106s02"/>
    <property type="match status" value="1"/>
</dbReference>
<dbReference type="NCBIfam" id="TIGR02139">
    <property type="entry name" value="permease_CysT"/>
    <property type="match status" value="1"/>
</dbReference>
<dbReference type="PANTHER" id="PTHR30406">
    <property type="entry name" value="SULFATE TRANSPORT SYSTEM PERMEASE PROTEIN"/>
    <property type="match status" value="1"/>
</dbReference>
<dbReference type="PANTHER" id="PTHR30406:SF8">
    <property type="entry name" value="SULFATE TRANSPORT SYSTEM PERMEASE PROTEIN CYST"/>
    <property type="match status" value="1"/>
</dbReference>
<dbReference type="Pfam" id="PF00528">
    <property type="entry name" value="BPD_transp_1"/>
    <property type="match status" value="1"/>
</dbReference>
<dbReference type="SUPFAM" id="SSF161098">
    <property type="entry name" value="MetI-like"/>
    <property type="match status" value="1"/>
</dbReference>
<dbReference type="PROSITE" id="PS50928">
    <property type="entry name" value="ABC_TM1"/>
    <property type="match status" value="1"/>
</dbReference>
<keyword id="KW-0472">Membrane</keyword>
<keyword id="KW-0934">Plastid</keyword>
<keyword id="KW-0764">Sulfate transport</keyword>
<keyword id="KW-0812">Transmembrane</keyword>
<keyword id="KW-1133">Transmembrane helix</keyword>
<keyword id="KW-0813">Transport</keyword>
<gene>
    <name type="primary">cysT</name>
</gene>
<protein>
    <recommendedName>
        <fullName>Probable sulfate transport system permease protein cysT</fullName>
    </recommendedName>
</protein>